<name>SEY1_THEAN</name>
<evidence type="ECO:0000255" key="1">
    <source>
        <dbReference type="HAMAP-Rule" id="MF_03109"/>
    </source>
</evidence>
<evidence type="ECO:0000255" key="2">
    <source>
        <dbReference type="PROSITE-ProRule" id="PRU01052"/>
    </source>
</evidence>
<organism>
    <name type="scientific">Theileria annulata</name>
    <dbReference type="NCBI Taxonomy" id="5874"/>
    <lineage>
        <taxon>Eukaryota</taxon>
        <taxon>Sar</taxon>
        <taxon>Alveolata</taxon>
        <taxon>Apicomplexa</taxon>
        <taxon>Aconoidasida</taxon>
        <taxon>Piroplasmida</taxon>
        <taxon>Theileriidae</taxon>
        <taxon>Theileria</taxon>
    </lineage>
</organism>
<proteinExistence type="inferred from homology"/>
<feature type="chain" id="PRO_0000384958" description="Protein SEY1 homolog">
    <location>
        <begin position="1"/>
        <end position="918"/>
    </location>
</feature>
<feature type="topological domain" description="Cytoplasmic" evidence="1">
    <location>
        <begin position="1"/>
        <end position="701"/>
    </location>
</feature>
<feature type="transmembrane region" description="Helical" evidence="1">
    <location>
        <begin position="702"/>
        <end position="722"/>
    </location>
</feature>
<feature type="topological domain" description="Lumenal" evidence="1">
    <location>
        <begin position="723"/>
        <end position="725"/>
    </location>
</feature>
<feature type="transmembrane region" description="Helical" evidence="1">
    <location>
        <begin position="726"/>
        <end position="746"/>
    </location>
</feature>
<feature type="topological domain" description="Cytoplasmic" evidence="1">
    <location>
        <begin position="747"/>
        <end position="918"/>
    </location>
</feature>
<feature type="domain" description="GB1/RHD3-type G" evidence="2">
    <location>
        <begin position="46"/>
        <end position="280"/>
    </location>
</feature>
<feature type="coiled-coil region" evidence="1">
    <location>
        <begin position="554"/>
        <end position="626"/>
    </location>
</feature>
<feature type="binding site" evidence="1">
    <location>
        <begin position="56"/>
        <end position="63"/>
    </location>
    <ligand>
        <name>GTP</name>
        <dbReference type="ChEBI" id="CHEBI:37565"/>
    </ligand>
</feature>
<sequence length="918" mass="105667">MESSNHLPNKDSDTVSVTPVEFSNYQCEINPGFNDFLKKSGFEDFGFKFNVVTILGSQSSGKSHLLNSLFNASFQTMDASKGHSQTTKGIWGSLVLSKDTSMNATVVFDSEGTDSRERGEGRLTFEHRSSLFCLALSDVVIVNIWYNSMGNLTGSNYGLLKTVVEANLELVDTNNEENYKTVLFFCVRDWSPSLSPLNVVKDYVLNNYMSSIWNEISKPARFENLGVESLFEIRVFGLSNAVTQSESFEMDVKEVKKTWNSLKPREYSRRVPSDGFFVYSKNVWKTIIEQNHLDIPTQKEMLSSYRCSEIKTMILESLTNALPELKEKDFSEYLMGLLKKVENQYFSQASRYDPVVSKKVGKELLEQVCRKFQPFFESALGDYVKKLAVESSSLLDKEFSVNSSGKELKVSNARPYTVWPNFSKKCEELQKKQTEKLSHHLSSFKVTFKSTVSFEFEFEYQPLKDHLNLLVSSEFEVLRSRHLELLKQQLDSMCNSCFALVKNNMMDRSLNEDQFWDYFDELFDETHKNCVDQLTTSYVGLVKGATRTEFEQLSLVLLLKATQSNFEELQNNLEQLLLERFDKFFNYQEFKGELIPTEWHKQSAQELNNRYKESKEDALTLLQVLKTTKTKKLPSFDANYVKKNQYFYSTLEGPVSDKYSSPLTEQFTIELTNSCSKKFMEMYKNAQVVQNAGTSVSSWRNIPPVFWLVLLVLGWNELRAAFRVLLKFYILIPLLIVSYFTFSYSANKLLGPKANEYVKPVRDKALSLLTALFAWFVRTLHMIASKSSSFKQQTKNLKMAKKGNKNRDSDDEYVGKTVTKSSHSIYKHREPMDINLIVDHDEVEAEKNNLPCWRAAYASGPARPQRHLCVICGFFANYKCRNCATRRIEAINSYYCSLRCLEVHNETNCGKAVHLAQW</sequence>
<dbReference type="EC" id="3.6.5.-" evidence="1"/>
<dbReference type="EMBL" id="CR940353">
    <property type="protein sequence ID" value="CAI76515.1"/>
    <property type="molecule type" value="Genomic_DNA"/>
</dbReference>
<dbReference type="RefSeq" id="XP_953140.1">
    <property type="nucleotide sequence ID" value="XM_948047.1"/>
</dbReference>
<dbReference type="SMR" id="Q4U9I8"/>
<dbReference type="FunCoup" id="Q4U9I8">
    <property type="interactions" value="4"/>
</dbReference>
<dbReference type="STRING" id="5874.Q4U9I8"/>
<dbReference type="GeneID" id="3863163"/>
<dbReference type="KEGG" id="tan:TA08650"/>
<dbReference type="VEuPathDB" id="PiroplasmaDB:TA08650"/>
<dbReference type="eggNOG" id="KOG2203">
    <property type="taxonomic scope" value="Eukaryota"/>
</dbReference>
<dbReference type="eggNOG" id="KOG3362">
    <property type="taxonomic scope" value="Eukaryota"/>
</dbReference>
<dbReference type="InParanoid" id="Q4U9I8"/>
<dbReference type="OMA" id="PIIKMTE"/>
<dbReference type="OrthoDB" id="1597724at2759"/>
<dbReference type="Proteomes" id="UP000001950">
    <property type="component" value="Chromosome 4"/>
</dbReference>
<dbReference type="GO" id="GO:0005789">
    <property type="term" value="C:endoplasmic reticulum membrane"/>
    <property type="evidence" value="ECO:0007669"/>
    <property type="project" value="UniProtKB-SubCell"/>
</dbReference>
<dbReference type="GO" id="GO:0005525">
    <property type="term" value="F:GTP binding"/>
    <property type="evidence" value="ECO:0007669"/>
    <property type="project" value="UniProtKB-UniRule"/>
</dbReference>
<dbReference type="GO" id="GO:0003924">
    <property type="term" value="F:GTPase activity"/>
    <property type="evidence" value="ECO:0007669"/>
    <property type="project" value="UniProtKB-UniRule"/>
</dbReference>
<dbReference type="GO" id="GO:0016320">
    <property type="term" value="P:endoplasmic reticulum membrane fusion"/>
    <property type="evidence" value="ECO:0007669"/>
    <property type="project" value="TreeGrafter"/>
</dbReference>
<dbReference type="CDD" id="cd01851">
    <property type="entry name" value="GBP"/>
    <property type="match status" value="1"/>
</dbReference>
<dbReference type="CDD" id="cd21437">
    <property type="entry name" value="zf-HIT_ZNHIT1_like"/>
    <property type="match status" value="1"/>
</dbReference>
<dbReference type="Gene3D" id="3.40.50.300">
    <property type="entry name" value="P-loop containing nucleotide triphosphate hydrolases"/>
    <property type="match status" value="1"/>
</dbReference>
<dbReference type="HAMAP" id="MF_03109">
    <property type="entry name" value="Sey1"/>
    <property type="match status" value="1"/>
</dbReference>
<dbReference type="InterPro" id="IPR030386">
    <property type="entry name" value="G_GB1_RHD3_dom"/>
</dbReference>
<dbReference type="InterPro" id="IPR027417">
    <property type="entry name" value="P-loop_NTPase"/>
</dbReference>
<dbReference type="InterPro" id="IPR008803">
    <property type="entry name" value="RHD3/Sey1"/>
</dbReference>
<dbReference type="InterPro" id="IPR046758">
    <property type="entry name" value="Sey1/RHD3-like_3HB"/>
</dbReference>
<dbReference type="InterPro" id="IPR007529">
    <property type="entry name" value="Znf_HIT"/>
</dbReference>
<dbReference type="PANTHER" id="PTHR45923">
    <property type="entry name" value="PROTEIN SEY1"/>
    <property type="match status" value="1"/>
</dbReference>
<dbReference type="PANTHER" id="PTHR45923:SF2">
    <property type="entry name" value="PROTEIN SEY1"/>
    <property type="match status" value="1"/>
</dbReference>
<dbReference type="Pfam" id="PF05879">
    <property type="entry name" value="RHD3_GTPase"/>
    <property type="match status" value="1"/>
</dbReference>
<dbReference type="Pfam" id="PF20428">
    <property type="entry name" value="Sey1_3HB"/>
    <property type="match status" value="1"/>
</dbReference>
<dbReference type="Pfam" id="PF04438">
    <property type="entry name" value="zf-HIT"/>
    <property type="match status" value="1"/>
</dbReference>
<dbReference type="SUPFAM" id="SSF52540">
    <property type="entry name" value="P-loop containing nucleoside triphosphate hydrolases"/>
    <property type="match status" value="1"/>
</dbReference>
<dbReference type="PROSITE" id="PS51715">
    <property type="entry name" value="G_GB1_RHD3"/>
    <property type="match status" value="1"/>
</dbReference>
<protein>
    <recommendedName>
        <fullName evidence="1">Protein SEY1 homolog</fullName>
        <ecNumber evidence="1">3.6.5.-</ecNumber>
    </recommendedName>
</protein>
<gene>
    <name type="ORF">TA08650</name>
</gene>
<keyword id="KW-0175">Coiled coil</keyword>
<keyword id="KW-0256">Endoplasmic reticulum</keyword>
<keyword id="KW-0342">GTP-binding</keyword>
<keyword id="KW-0378">Hydrolase</keyword>
<keyword id="KW-0472">Membrane</keyword>
<keyword id="KW-0547">Nucleotide-binding</keyword>
<keyword id="KW-1185">Reference proteome</keyword>
<keyword id="KW-0812">Transmembrane</keyword>
<keyword id="KW-1133">Transmembrane helix</keyword>
<comment type="function">
    <text evidence="1">Probable GTP-binding protein that may be involved in cell development.</text>
</comment>
<comment type="subcellular location">
    <subcellularLocation>
        <location evidence="1">Endoplasmic reticulum membrane</location>
        <topology evidence="1">Multi-pass membrane protein</topology>
    </subcellularLocation>
</comment>
<comment type="similarity">
    <text evidence="2">Belongs to the TRAFAC class dynamin-like GTPase superfamily. GB1/RHD3 GTPase family. RHD3 subfamily.</text>
</comment>
<accession>Q4U9I8</accession>
<reference key="1">
    <citation type="journal article" date="2005" name="Science">
        <title>Genome of the host-cell transforming parasite Theileria annulata compared with T. parva.</title>
        <authorList>
            <person name="Pain A."/>
            <person name="Renauld H."/>
            <person name="Berriman M."/>
            <person name="Murphy L."/>
            <person name="Yeats C.A."/>
            <person name="Weir W."/>
            <person name="Kerhornou A."/>
            <person name="Aslett M."/>
            <person name="Bishop R."/>
            <person name="Bouchier C."/>
            <person name="Cochet M."/>
            <person name="Coulson R.M.R."/>
            <person name="Cronin A."/>
            <person name="de Villiers E.P."/>
            <person name="Fraser A."/>
            <person name="Fosker N."/>
            <person name="Gardner M."/>
            <person name="Goble A."/>
            <person name="Griffiths-Jones S."/>
            <person name="Harris D.E."/>
            <person name="Katzer F."/>
            <person name="Larke N."/>
            <person name="Lord A."/>
            <person name="Maser P."/>
            <person name="McKellar S."/>
            <person name="Mooney P."/>
            <person name="Morton F."/>
            <person name="Nene V."/>
            <person name="O'Neil S."/>
            <person name="Price C."/>
            <person name="Quail M.A."/>
            <person name="Rabbinowitsch E."/>
            <person name="Rawlings N.D."/>
            <person name="Rutter S."/>
            <person name="Saunders D."/>
            <person name="Seeger K."/>
            <person name="Shah T."/>
            <person name="Squares R."/>
            <person name="Squares S."/>
            <person name="Tivey A."/>
            <person name="Walker A.R."/>
            <person name="Woodward J."/>
            <person name="Dobbelaere D.A.E."/>
            <person name="Langsley G."/>
            <person name="Rajandream M.A."/>
            <person name="McKeever D."/>
            <person name="Shiels B."/>
            <person name="Tait A."/>
            <person name="Barrell B.G."/>
            <person name="Hall N."/>
        </authorList>
    </citation>
    <scope>NUCLEOTIDE SEQUENCE [LARGE SCALE GENOMIC DNA]</scope>
    <source>
        <strain>Ankara</strain>
    </source>
</reference>